<organism>
    <name type="scientific">Burkholderia mallei (strain NCTC 10247)</name>
    <dbReference type="NCBI Taxonomy" id="320389"/>
    <lineage>
        <taxon>Bacteria</taxon>
        <taxon>Pseudomonadati</taxon>
        <taxon>Pseudomonadota</taxon>
        <taxon>Betaproteobacteria</taxon>
        <taxon>Burkholderiales</taxon>
        <taxon>Burkholderiaceae</taxon>
        <taxon>Burkholderia</taxon>
        <taxon>pseudomallei group</taxon>
    </lineage>
</organism>
<reference key="1">
    <citation type="journal article" date="2010" name="Genome Biol. Evol.">
        <title>Continuing evolution of Burkholderia mallei through genome reduction and large-scale rearrangements.</title>
        <authorList>
            <person name="Losada L."/>
            <person name="Ronning C.M."/>
            <person name="DeShazer D."/>
            <person name="Woods D."/>
            <person name="Fedorova N."/>
            <person name="Kim H.S."/>
            <person name="Shabalina S.A."/>
            <person name="Pearson T.R."/>
            <person name="Brinkac L."/>
            <person name="Tan P."/>
            <person name="Nandi T."/>
            <person name="Crabtree J."/>
            <person name="Badger J."/>
            <person name="Beckstrom-Sternberg S."/>
            <person name="Saqib M."/>
            <person name="Schutzer S.E."/>
            <person name="Keim P."/>
            <person name="Nierman W.C."/>
        </authorList>
    </citation>
    <scope>NUCLEOTIDE SEQUENCE [LARGE SCALE GENOMIC DNA]</scope>
    <source>
        <strain>NCTC 10247</strain>
    </source>
</reference>
<name>KUP_BURM7</name>
<feature type="chain" id="PRO_0000315982" description="Probable potassium transport system protein Kup">
    <location>
        <begin position="1"/>
        <end position="630"/>
    </location>
</feature>
<feature type="transmembrane region" description="Helical" evidence="1">
    <location>
        <begin position="17"/>
        <end position="37"/>
    </location>
</feature>
<feature type="transmembrane region" description="Helical" evidence="1">
    <location>
        <begin position="51"/>
        <end position="71"/>
    </location>
</feature>
<feature type="transmembrane region" description="Helical" evidence="1">
    <location>
        <begin position="105"/>
        <end position="125"/>
    </location>
</feature>
<feature type="transmembrane region" description="Helical" evidence="1">
    <location>
        <begin position="144"/>
        <end position="164"/>
    </location>
</feature>
<feature type="transmembrane region" description="Helical" evidence="1">
    <location>
        <begin position="175"/>
        <end position="195"/>
    </location>
</feature>
<feature type="transmembrane region" description="Helical" evidence="1">
    <location>
        <begin position="218"/>
        <end position="238"/>
    </location>
</feature>
<feature type="transmembrane region" description="Helical" evidence="1">
    <location>
        <begin position="255"/>
        <end position="275"/>
    </location>
</feature>
<feature type="transmembrane region" description="Helical" evidence="1">
    <location>
        <begin position="283"/>
        <end position="303"/>
    </location>
</feature>
<feature type="transmembrane region" description="Helical" evidence="1">
    <location>
        <begin position="344"/>
        <end position="364"/>
    </location>
</feature>
<feature type="transmembrane region" description="Helical" evidence="1">
    <location>
        <begin position="374"/>
        <end position="394"/>
    </location>
</feature>
<feature type="transmembrane region" description="Helical" evidence="1">
    <location>
        <begin position="402"/>
        <end position="422"/>
    </location>
</feature>
<feature type="transmembrane region" description="Helical" evidence="1">
    <location>
        <begin position="428"/>
        <end position="448"/>
    </location>
</feature>
<evidence type="ECO:0000255" key="1">
    <source>
        <dbReference type="HAMAP-Rule" id="MF_01522"/>
    </source>
</evidence>
<evidence type="ECO:0000305" key="2"/>
<accession>A3MK60</accession>
<sequence>MTDTNHSSMRQHSLQSLAIAAIGVVFGDIGTSPLYSLKEAFSPAHGIPLTPSAILGVISLLFWAIILVVGIKYVLFVMRADNNGEGGVLALMALSLRPLNPKSRITGLMMALGIFGACMFYGDAVITPAISVMSAVEGLEVATPQLSHLVLPITIVILIALFWIQRHGTATVGKLFGPIMLLWFVTIAALGIYHIARAPMIVSAINPYYAFSFMSEHVLLAYVVLGSVVLVLTGAEALYADMGHFGAKPIRLAAYVLVMPSLVLNYFGQGALLLLDPKAIENPFFLLAPQWAALPLVVLSTVATVIASQAVISGAYSLTSQAIQLGYVPRMKILHTSELAIGQIYVPVVNWLLLFVILCIVIGFKSSDNLAAAYGIAVTATMVITTILAAVVMVKVWNWNKLLVAMIIGVFLVIDLGFFGANLLKVEQGGWLPLGIGALLFFLLMTWYKGRHIVKERTAADGIPLAPFLQGLLAHPPHRVSGTAIYLTGNDTLVPVSLLHNLKHNKVLHERTIFMTFVTRDIPYVKDHERVTVHDAGEGLYIVKAEYGFNETPDVKAVLEEVARQRGMTFELMDTSFFLARETVVPTHLPGMSIWRERVFAWMHQNAAKPTDFFAIPANRVVELGTKIEI</sequence>
<proteinExistence type="inferred from homology"/>
<dbReference type="EMBL" id="CP000548">
    <property type="protein sequence ID" value="ABO06792.1"/>
    <property type="status" value="ALT_INIT"/>
    <property type="molecule type" value="Genomic_DNA"/>
</dbReference>
<dbReference type="RefSeq" id="WP_004191791.1">
    <property type="nucleotide sequence ID" value="NZ_CP007802.1"/>
</dbReference>
<dbReference type="KEGG" id="bmaz:BM44_2003"/>
<dbReference type="KEGG" id="bmn:BMA10247_1092"/>
<dbReference type="PATRIC" id="fig|320389.8.peg.2249"/>
<dbReference type="GO" id="GO:0005886">
    <property type="term" value="C:plasma membrane"/>
    <property type="evidence" value="ECO:0007669"/>
    <property type="project" value="UniProtKB-SubCell"/>
</dbReference>
<dbReference type="GO" id="GO:0015079">
    <property type="term" value="F:potassium ion transmembrane transporter activity"/>
    <property type="evidence" value="ECO:0007669"/>
    <property type="project" value="UniProtKB-UniRule"/>
</dbReference>
<dbReference type="GO" id="GO:0015293">
    <property type="term" value="F:symporter activity"/>
    <property type="evidence" value="ECO:0007669"/>
    <property type="project" value="UniProtKB-UniRule"/>
</dbReference>
<dbReference type="HAMAP" id="MF_01522">
    <property type="entry name" value="Kup"/>
    <property type="match status" value="1"/>
</dbReference>
<dbReference type="InterPro" id="IPR003855">
    <property type="entry name" value="K+_transporter"/>
</dbReference>
<dbReference type="InterPro" id="IPR053952">
    <property type="entry name" value="K_trans_C"/>
</dbReference>
<dbReference type="InterPro" id="IPR053951">
    <property type="entry name" value="K_trans_N"/>
</dbReference>
<dbReference type="InterPro" id="IPR023051">
    <property type="entry name" value="Kup"/>
</dbReference>
<dbReference type="PANTHER" id="PTHR30540:SF79">
    <property type="entry name" value="LOW AFFINITY POTASSIUM TRANSPORT SYSTEM PROTEIN KUP"/>
    <property type="match status" value="1"/>
</dbReference>
<dbReference type="PANTHER" id="PTHR30540">
    <property type="entry name" value="OSMOTIC STRESS POTASSIUM TRANSPORTER"/>
    <property type="match status" value="1"/>
</dbReference>
<dbReference type="Pfam" id="PF02705">
    <property type="entry name" value="K_trans"/>
    <property type="match status" value="1"/>
</dbReference>
<dbReference type="Pfam" id="PF22776">
    <property type="entry name" value="K_trans_C"/>
    <property type="match status" value="1"/>
</dbReference>
<comment type="function">
    <text evidence="1">Transport of potassium into the cell. Likely operates as a K(+):H(+) symporter.</text>
</comment>
<comment type="catalytic activity">
    <reaction evidence="1">
        <text>K(+)(in) + H(+)(in) = K(+)(out) + H(+)(out)</text>
        <dbReference type="Rhea" id="RHEA:28490"/>
        <dbReference type="ChEBI" id="CHEBI:15378"/>
        <dbReference type="ChEBI" id="CHEBI:29103"/>
    </reaction>
    <physiologicalReaction direction="right-to-left" evidence="1">
        <dbReference type="Rhea" id="RHEA:28492"/>
    </physiologicalReaction>
</comment>
<comment type="subcellular location">
    <subcellularLocation>
        <location evidence="1">Cell inner membrane</location>
        <topology evidence="1">Multi-pass membrane protein</topology>
    </subcellularLocation>
</comment>
<comment type="similarity">
    <text evidence="1">Belongs to the HAK/KUP transporter (TC 2.A.72) family.</text>
</comment>
<comment type="sequence caution" evidence="2">
    <conflict type="erroneous initiation">
        <sequence resource="EMBL-CDS" id="ABO06792"/>
    </conflict>
</comment>
<keyword id="KW-0997">Cell inner membrane</keyword>
<keyword id="KW-1003">Cell membrane</keyword>
<keyword id="KW-0406">Ion transport</keyword>
<keyword id="KW-0472">Membrane</keyword>
<keyword id="KW-0630">Potassium</keyword>
<keyword id="KW-0633">Potassium transport</keyword>
<keyword id="KW-0769">Symport</keyword>
<keyword id="KW-0812">Transmembrane</keyword>
<keyword id="KW-1133">Transmembrane helix</keyword>
<keyword id="KW-0813">Transport</keyword>
<protein>
    <recommendedName>
        <fullName evidence="1">Probable potassium transport system protein Kup</fullName>
    </recommendedName>
</protein>
<gene>
    <name evidence="1" type="primary">kup</name>
    <name type="ordered locus">BMA10247_1092</name>
</gene>